<evidence type="ECO:0000255" key="1">
    <source>
        <dbReference type="HAMAP-Rule" id="MF_00378"/>
    </source>
</evidence>
<sequence>MEDSKPLSVSEVTRIIKNLISGSKDLKNIWVRGEISNYSKASSGHIYFSLKDAGSLIRCTFFNYSNKNYSGKPLSDGKEIQVYGTITLYEAGGSYNLNVTRVEELGQGDILLQIEKLKQKLAVEGIFDPEKKRRIPSFPKTLGIATSPTGAAIEDIIKISRSRFPGINILIAPCIVQGEDAPDSIVAAIEELNHPNWKVDVIIAGRGGGSFEDLMAFNDEKVVRAYANSRIPIISAVGHQTDVLLSDFAADHFTPTPTAAAEYAIPKEEDVLQFLSQLEGRIKSSLVTKISSNRDRLRLLSGKFIFKEPMQLLNQRSQRVDEIGIRLQKALSNKLNLARVRLERYQNLTSRIQNILFHKKQKAEFWTSKVEDLSPAATMKRGYSILRNENGKIIRSPEETKPEEELQVLLSGGTMQVIRKGK</sequence>
<comment type="function">
    <text evidence="1">Bidirectionally degrades single-stranded DNA into large acid-insoluble oligonucleotides, which are then degraded further into small acid-soluble oligonucleotides.</text>
</comment>
<comment type="catalytic activity">
    <reaction evidence="1">
        <text>Exonucleolytic cleavage in either 5'- to 3'- or 3'- to 5'-direction to yield nucleoside 5'-phosphates.</text>
        <dbReference type="EC" id="3.1.11.6"/>
    </reaction>
</comment>
<comment type="subunit">
    <text evidence="1">Heterooligomer composed of large and small subunits.</text>
</comment>
<comment type="subcellular location">
    <subcellularLocation>
        <location evidence="1">Cytoplasm</location>
    </subcellularLocation>
</comment>
<comment type="similarity">
    <text evidence="1">Belongs to the XseA family.</text>
</comment>
<reference key="1">
    <citation type="journal article" date="2004" name="J. Bacteriol.">
        <title>Comparative genomics of two Leptospira interrogans serovars reveals novel insights into physiology and pathogenesis.</title>
        <authorList>
            <person name="Nascimento A.L.T.O."/>
            <person name="Ko A.I."/>
            <person name="Martins E.A.L."/>
            <person name="Monteiro-Vitorello C.B."/>
            <person name="Ho P.L."/>
            <person name="Haake D.A."/>
            <person name="Verjovski-Almeida S."/>
            <person name="Hartskeerl R.A."/>
            <person name="Marques M.V."/>
            <person name="Oliveira M.C."/>
            <person name="Menck C.F.M."/>
            <person name="Leite L.C.C."/>
            <person name="Carrer H."/>
            <person name="Coutinho L.L."/>
            <person name="Degrave W.M."/>
            <person name="Dellagostin O.A."/>
            <person name="El-Dorry H."/>
            <person name="Ferro E.S."/>
            <person name="Ferro M.I.T."/>
            <person name="Furlan L.R."/>
            <person name="Gamberini M."/>
            <person name="Giglioti E.A."/>
            <person name="Goes-Neto A."/>
            <person name="Goldman G.H."/>
            <person name="Goldman M.H.S."/>
            <person name="Harakava R."/>
            <person name="Jeronimo S.M.B."/>
            <person name="Junqueira-de-Azevedo I.L.M."/>
            <person name="Kimura E.T."/>
            <person name="Kuramae E.E."/>
            <person name="Lemos E.G.M."/>
            <person name="Lemos M.V.F."/>
            <person name="Marino C.L."/>
            <person name="Nunes L.R."/>
            <person name="de Oliveira R.C."/>
            <person name="Pereira G.G."/>
            <person name="Reis M.S."/>
            <person name="Schriefer A."/>
            <person name="Siqueira W.J."/>
            <person name="Sommer P."/>
            <person name="Tsai S.M."/>
            <person name="Simpson A.J.G."/>
            <person name="Ferro J.A."/>
            <person name="Camargo L.E.A."/>
            <person name="Kitajima J.P."/>
            <person name="Setubal J.C."/>
            <person name="Van Sluys M.A."/>
        </authorList>
    </citation>
    <scope>NUCLEOTIDE SEQUENCE [LARGE SCALE GENOMIC DNA]</scope>
    <source>
        <strain>Fiocruz L1-130</strain>
    </source>
</reference>
<feature type="chain" id="PRO_0000197854" description="Exodeoxyribonuclease 7 large subunit">
    <location>
        <begin position="1"/>
        <end position="422"/>
    </location>
</feature>
<proteinExistence type="inferred from homology"/>
<accession>Q72RZ7</accession>
<dbReference type="EC" id="3.1.11.6" evidence="1"/>
<dbReference type="EMBL" id="AE016823">
    <property type="protein sequence ID" value="AAS70186.1"/>
    <property type="molecule type" value="Genomic_DNA"/>
</dbReference>
<dbReference type="RefSeq" id="WP_000390225.1">
    <property type="nucleotide sequence ID" value="NC_005823.1"/>
</dbReference>
<dbReference type="SMR" id="Q72RZ7"/>
<dbReference type="GeneID" id="61144888"/>
<dbReference type="KEGG" id="lic:LIC_11591"/>
<dbReference type="HOGENOM" id="CLU_023625_3_1_12"/>
<dbReference type="Proteomes" id="UP000007037">
    <property type="component" value="Chromosome I"/>
</dbReference>
<dbReference type="GO" id="GO:0005737">
    <property type="term" value="C:cytoplasm"/>
    <property type="evidence" value="ECO:0007669"/>
    <property type="project" value="UniProtKB-SubCell"/>
</dbReference>
<dbReference type="GO" id="GO:0009318">
    <property type="term" value="C:exodeoxyribonuclease VII complex"/>
    <property type="evidence" value="ECO:0007669"/>
    <property type="project" value="InterPro"/>
</dbReference>
<dbReference type="GO" id="GO:0008855">
    <property type="term" value="F:exodeoxyribonuclease VII activity"/>
    <property type="evidence" value="ECO:0007669"/>
    <property type="project" value="UniProtKB-UniRule"/>
</dbReference>
<dbReference type="GO" id="GO:0003676">
    <property type="term" value="F:nucleic acid binding"/>
    <property type="evidence" value="ECO:0007669"/>
    <property type="project" value="InterPro"/>
</dbReference>
<dbReference type="GO" id="GO:0006308">
    <property type="term" value="P:DNA catabolic process"/>
    <property type="evidence" value="ECO:0007669"/>
    <property type="project" value="UniProtKB-UniRule"/>
</dbReference>
<dbReference type="CDD" id="cd04489">
    <property type="entry name" value="ExoVII_LU_OBF"/>
    <property type="match status" value="1"/>
</dbReference>
<dbReference type="Gene3D" id="2.40.50.1010">
    <property type="match status" value="1"/>
</dbReference>
<dbReference type="HAMAP" id="MF_00378">
    <property type="entry name" value="Exonuc_7_L"/>
    <property type="match status" value="1"/>
</dbReference>
<dbReference type="InterPro" id="IPR003753">
    <property type="entry name" value="Exonuc_VII_L"/>
</dbReference>
<dbReference type="InterPro" id="IPR020579">
    <property type="entry name" value="Exonuc_VII_lsu_C"/>
</dbReference>
<dbReference type="InterPro" id="IPR025824">
    <property type="entry name" value="OB-fold_nuc-bd_dom"/>
</dbReference>
<dbReference type="NCBIfam" id="TIGR00237">
    <property type="entry name" value="xseA"/>
    <property type="match status" value="1"/>
</dbReference>
<dbReference type="PANTHER" id="PTHR30008">
    <property type="entry name" value="EXODEOXYRIBONUCLEASE 7 LARGE SUBUNIT"/>
    <property type="match status" value="1"/>
</dbReference>
<dbReference type="PANTHER" id="PTHR30008:SF0">
    <property type="entry name" value="EXODEOXYRIBONUCLEASE 7 LARGE SUBUNIT"/>
    <property type="match status" value="1"/>
</dbReference>
<dbReference type="Pfam" id="PF02601">
    <property type="entry name" value="Exonuc_VII_L"/>
    <property type="match status" value="1"/>
</dbReference>
<dbReference type="Pfam" id="PF13742">
    <property type="entry name" value="tRNA_anti_2"/>
    <property type="match status" value="1"/>
</dbReference>
<organism>
    <name type="scientific">Leptospira interrogans serogroup Icterohaemorrhagiae serovar copenhageni (strain Fiocruz L1-130)</name>
    <dbReference type="NCBI Taxonomy" id="267671"/>
    <lineage>
        <taxon>Bacteria</taxon>
        <taxon>Pseudomonadati</taxon>
        <taxon>Spirochaetota</taxon>
        <taxon>Spirochaetia</taxon>
        <taxon>Leptospirales</taxon>
        <taxon>Leptospiraceae</taxon>
        <taxon>Leptospira</taxon>
    </lineage>
</organism>
<gene>
    <name evidence="1" type="primary">xseA</name>
    <name type="ordered locus">LIC_11591</name>
</gene>
<protein>
    <recommendedName>
        <fullName evidence="1">Exodeoxyribonuclease 7 large subunit</fullName>
        <ecNumber evidence="1">3.1.11.6</ecNumber>
    </recommendedName>
    <alternativeName>
        <fullName evidence="1">Exodeoxyribonuclease VII large subunit</fullName>
        <shortName evidence="1">Exonuclease VII large subunit</shortName>
    </alternativeName>
</protein>
<keyword id="KW-0963">Cytoplasm</keyword>
<keyword id="KW-0269">Exonuclease</keyword>
<keyword id="KW-0378">Hydrolase</keyword>
<keyword id="KW-0540">Nuclease</keyword>
<name>EX7L_LEPIC</name>